<evidence type="ECO:0000255" key="1">
    <source>
        <dbReference type="HAMAP-Rule" id="MF_00539"/>
    </source>
</evidence>
<evidence type="ECO:0000256" key="2">
    <source>
        <dbReference type="SAM" id="MobiDB-lite"/>
    </source>
</evidence>
<evidence type="ECO:0000305" key="3"/>
<reference key="1">
    <citation type="journal article" date="2007" name="J. Bacteriol.">
        <title>Genome of the opportunistic pathogen Streptococcus sanguinis.</title>
        <authorList>
            <person name="Xu P."/>
            <person name="Alves J.M."/>
            <person name="Kitten T."/>
            <person name="Brown A."/>
            <person name="Chen Z."/>
            <person name="Ozaki L.S."/>
            <person name="Manque P."/>
            <person name="Ge X."/>
            <person name="Serrano M.G."/>
            <person name="Puiu D."/>
            <person name="Hendricks S."/>
            <person name="Wang Y."/>
            <person name="Chaplin M.D."/>
            <person name="Akan D."/>
            <person name="Paik S."/>
            <person name="Peterson D.L."/>
            <person name="Macrina F.L."/>
            <person name="Buck G.A."/>
        </authorList>
    </citation>
    <scope>NUCLEOTIDE SEQUENCE [LARGE SCALE GENOMIC DNA]</scope>
    <source>
        <strain>SK36</strain>
    </source>
</reference>
<gene>
    <name evidence="1" type="primary">rpmA</name>
    <name type="ordered locus">SSA_1062</name>
</gene>
<feature type="chain" id="PRO_1000017624" description="Large ribosomal subunit protein bL27">
    <location>
        <begin position="1"/>
        <end position="97"/>
    </location>
</feature>
<feature type="region of interest" description="Disordered" evidence="2">
    <location>
        <begin position="14"/>
        <end position="36"/>
    </location>
</feature>
<proteinExistence type="inferred from homology"/>
<name>RL27_STRSV</name>
<protein>
    <recommendedName>
        <fullName evidence="1">Large ribosomal subunit protein bL27</fullName>
    </recommendedName>
    <alternativeName>
        <fullName evidence="3">50S ribosomal protein L27</fullName>
    </alternativeName>
</protein>
<comment type="similarity">
    <text evidence="1">Belongs to the bacterial ribosomal protein bL27 family.</text>
</comment>
<sequence>MLKMNLANLQLFAHKKGGGSTSNGRDSQAKRLGAKAADGQTVTGGSILYRQRGTHIHAGVNVGRGGDDTLFAKVEGVVRFERKGRDKKQVSVYPIAK</sequence>
<dbReference type="EMBL" id="CP000387">
    <property type="protein sequence ID" value="ABN44476.1"/>
    <property type="molecule type" value="Genomic_DNA"/>
</dbReference>
<dbReference type="RefSeq" id="WP_002895619.1">
    <property type="nucleotide sequence ID" value="NZ_CAXTYR010000001.1"/>
</dbReference>
<dbReference type="RefSeq" id="YP_001035026.1">
    <property type="nucleotide sequence ID" value="NC_009009.1"/>
</dbReference>
<dbReference type="SMR" id="A3CMS1"/>
<dbReference type="STRING" id="388919.SSA_1062"/>
<dbReference type="GeneID" id="48425467"/>
<dbReference type="KEGG" id="ssa:SSA_1062"/>
<dbReference type="PATRIC" id="fig|388919.9.peg.1009"/>
<dbReference type="eggNOG" id="COG0211">
    <property type="taxonomic scope" value="Bacteria"/>
</dbReference>
<dbReference type="HOGENOM" id="CLU_095424_4_0_9"/>
<dbReference type="OrthoDB" id="9803474at2"/>
<dbReference type="Proteomes" id="UP000002148">
    <property type="component" value="Chromosome"/>
</dbReference>
<dbReference type="GO" id="GO:0022625">
    <property type="term" value="C:cytosolic large ribosomal subunit"/>
    <property type="evidence" value="ECO:0007669"/>
    <property type="project" value="TreeGrafter"/>
</dbReference>
<dbReference type="GO" id="GO:0003735">
    <property type="term" value="F:structural constituent of ribosome"/>
    <property type="evidence" value="ECO:0007669"/>
    <property type="project" value="InterPro"/>
</dbReference>
<dbReference type="GO" id="GO:0006412">
    <property type="term" value="P:translation"/>
    <property type="evidence" value="ECO:0007669"/>
    <property type="project" value="UniProtKB-UniRule"/>
</dbReference>
<dbReference type="FunFam" id="2.40.50.100:FF:000004">
    <property type="entry name" value="50S ribosomal protein L27"/>
    <property type="match status" value="1"/>
</dbReference>
<dbReference type="Gene3D" id="2.40.50.100">
    <property type="match status" value="1"/>
</dbReference>
<dbReference type="HAMAP" id="MF_00539">
    <property type="entry name" value="Ribosomal_bL27"/>
    <property type="match status" value="1"/>
</dbReference>
<dbReference type="InterPro" id="IPR001684">
    <property type="entry name" value="Ribosomal_bL27"/>
</dbReference>
<dbReference type="InterPro" id="IPR018261">
    <property type="entry name" value="Ribosomal_bL27_CS"/>
</dbReference>
<dbReference type="NCBIfam" id="TIGR00062">
    <property type="entry name" value="L27"/>
    <property type="match status" value="1"/>
</dbReference>
<dbReference type="PANTHER" id="PTHR15893:SF0">
    <property type="entry name" value="LARGE RIBOSOMAL SUBUNIT PROTEIN BL27M"/>
    <property type="match status" value="1"/>
</dbReference>
<dbReference type="PANTHER" id="PTHR15893">
    <property type="entry name" value="RIBOSOMAL PROTEIN L27"/>
    <property type="match status" value="1"/>
</dbReference>
<dbReference type="Pfam" id="PF01016">
    <property type="entry name" value="Ribosomal_L27"/>
    <property type="match status" value="1"/>
</dbReference>
<dbReference type="PRINTS" id="PR00063">
    <property type="entry name" value="RIBOSOMALL27"/>
</dbReference>
<dbReference type="SUPFAM" id="SSF110324">
    <property type="entry name" value="Ribosomal L27 protein-like"/>
    <property type="match status" value="1"/>
</dbReference>
<dbReference type="PROSITE" id="PS00831">
    <property type="entry name" value="RIBOSOMAL_L27"/>
    <property type="match status" value="1"/>
</dbReference>
<keyword id="KW-1185">Reference proteome</keyword>
<keyword id="KW-0687">Ribonucleoprotein</keyword>
<keyword id="KW-0689">Ribosomal protein</keyword>
<accession>A3CMS1</accession>
<organism>
    <name type="scientific">Streptococcus sanguinis (strain SK36)</name>
    <dbReference type="NCBI Taxonomy" id="388919"/>
    <lineage>
        <taxon>Bacteria</taxon>
        <taxon>Bacillati</taxon>
        <taxon>Bacillota</taxon>
        <taxon>Bacilli</taxon>
        <taxon>Lactobacillales</taxon>
        <taxon>Streptococcaceae</taxon>
        <taxon>Streptococcus</taxon>
    </lineage>
</organism>